<name>RPOA_RHIR8</name>
<sequence length="336" mass="37124">MIQKNWQELIKPNKVEFTSSGRTKATLVAEPLERGFGLTLGNALRRVLLSSLRGAAVTAVQIDGVLHEFSSIPGVREDVTDIVLNIKEIAIKMDGDDAKRMVVRKQGPGVVTAGDIQTVGDIEILNPEHVICTLDEGAEIRMEFTVNNGKGYVPAERNRAEDAPIGLIPVDSLYSPVKKVSYKVENTREGQVLDYDKLSMSIETDGSITGEDAVAFAARILQDQLGVFVNFDEPQKEAEEEAVTELAFNPALLKKVDELELSVRSANCLKNDNIVYIGDLIQKTEAEMLRTPNFGRKSLNEIKEVLASMGLHLGMEVPAWPPENIEDLAKRYEDQY</sequence>
<evidence type="ECO:0000255" key="1">
    <source>
        <dbReference type="HAMAP-Rule" id="MF_00059"/>
    </source>
</evidence>
<protein>
    <recommendedName>
        <fullName evidence="1">DNA-directed RNA polymerase subunit alpha</fullName>
        <shortName evidence="1">RNAP subunit alpha</shortName>
        <ecNumber evidence="1">2.7.7.6</ecNumber>
    </recommendedName>
    <alternativeName>
        <fullName evidence="1">RNA polymerase subunit alpha</fullName>
    </alternativeName>
    <alternativeName>
        <fullName evidence="1">Transcriptase subunit alpha</fullName>
    </alternativeName>
</protein>
<organism>
    <name type="scientific">Rhizobium rhizogenes (strain K84 / ATCC BAA-868)</name>
    <name type="common">Agrobacterium radiobacter</name>
    <dbReference type="NCBI Taxonomy" id="311403"/>
    <lineage>
        <taxon>Bacteria</taxon>
        <taxon>Pseudomonadati</taxon>
        <taxon>Pseudomonadota</taxon>
        <taxon>Alphaproteobacteria</taxon>
        <taxon>Hyphomicrobiales</taxon>
        <taxon>Rhizobiaceae</taxon>
        <taxon>Rhizobium/Agrobacterium group</taxon>
        <taxon>Rhizobium</taxon>
    </lineage>
</organism>
<feature type="chain" id="PRO_1000117816" description="DNA-directed RNA polymerase subunit alpha">
    <location>
        <begin position="1"/>
        <end position="336"/>
    </location>
</feature>
<feature type="region of interest" description="Alpha N-terminal domain (alpha-NTD)" evidence="1">
    <location>
        <begin position="1"/>
        <end position="232"/>
    </location>
</feature>
<feature type="region of interest" description="Alpha C-terminal domain (alpha-CTD)" evidence="1">
    <location>
        <begin position="248"/>
        <end position="336"/>
    </location>
</feature>
<proteinExistence type="inferred from homology"/>
<comment type="function">
    <text evidence="1">DNA-dependent RNA polymerase catalyzes the transcription of DNA into RNA using the four ribonucleoside triphosphates as substrates.</text>
</comment>
<comment type="catalytic activity">
    <reaction evidence="1">
        <text>RNA(n) + a ribonucleoside 5'-triphosphate = RNA(n+1) + diphosphate</text>
        <dbReference type="Rhea" id="RHEA:21248"/>
        <dbReference type="Rhea" id="RHEA-COMP:14527"/>
        <dbReference type="Rhea" id="RHEA-COMP:17342"/>
        <dbReference type="ChEBI" id="CHEBI:33019"/>
        <dbReference type="ChEBI" id="CHEBI:61557"/>
        <dbReference type="ChEBI" id="CHEBI:140395"/>
        <dbReference type="EC" id="2.7.7.6"/>
    </reaction>
</comment>
<comment type="subunit">
    <text evidence="1">Homodimer. The RNAP catalytic core consists of 2 alpha, 1 beta, 1 beta' and 1 omega subunit. When a sigma factor is associated with the core the holoenzyme is formed, which can initiate transcription.</text>
</comment>
<comment type="domain">
    <text evidence="1">The N-terminal domain is essential for RNAP assembly and basal transcription, whereas the C-terminal domain is involved in interaction with transcriptional regulators and with upstream promoter elements.</text>
</comment>
<comment type="similarity">
    <text evidence="1">Belongs to the RNA polymerase alpha chain family.</text>
</comment>
<gene>
    <name evidence="1" type="primary">rpoA</name>
    <name type="ordered locus">Arad_2005</name>
</gene>
<accession>B9JDV2</accession>
<reference key="1">
    <citation type="journal article" date="2009" name="J. Bacteriol.">
        <title>Genome sequences of three Agrobacterium biovars help elucidate the evolution of multichromosome genomes in bacteria.</title>
        <authorList>
            <person name="Slater S.C."/>
            <person name="Goldman B.S."/>
            <person name="Goodner B."/>
            <person name="Setubal J.C."/>
            <person name="Farrand S.K."/>
            <person name="Nester E.W."/>
            <person name="Burr T.J."/>
            <person name="Banta L."/>
            <person name="Dickerman A.W."/>
            <person name="Paulsen I."/>
            <person name="Otten L."/>
            <person name="Suen G."/>
            <person name="Welch R."/>
            <person name="Almeida N.F."/>
            <person name="Arnold F."/>
            <person name="Burton O.T."/>
            <person name="Du Z."/>
            <person name="Ewing A."/>
            <person name="Godsy E."/>
            <person name="Heisel S."/>
            <person name="Houmiel K.L."/>
            <person name="Jhaveri J."/>
            <person name="Lu J."/>
            <person name="Miller N.M."/>
            <person name="Norton S."/>
            <person name="Chen Q."/>
            <person name="Phoolcharoen W."/>
            <person name="Ohlin V."/>
            <person name="Ondrusek D."/>
            <person name="Pride N."/>
            <person name="Stricklin S.L."/>
            <person name="Sun J."/>
            <person name="Wheeler C."/>
            <person name="Wilson L."/>
            <person name="Zhu H."/>
            <person name="Wood D.W."/>
        </authorList>
    </citation>
    <scope>NUCLEOTIDE SEQUENCE [LARGE SCALE GENOMIC DNA]</scope>
    <source>
        <strain>K84 / ATCC BAA-868</strain>
    </source>
</reference>
<keyword id="KW-0240">DNA-directed RNA polymerase</keyword>
<keyword id="KW-0548">Nucleotidyltransferase</keyword>
<keyword id="KW-0804">Transcription</keyword>
<keyword id="KW-0808">Transferase</keyword>
<dbReference type="EC" id="2.7.7.6" evidence="1"/>
<dbReference type="EMBL" id="CP000628">
    <property type="protein sequence ID" value="ACM26303.1"/>
    <property type="molecule type" value="Genomic_DNA"/>
</dbReference>
<dbReference type="RefSeq" id="WP_007690792.1">
    <property type="nucleotide sequence ID" value="NC_011985.1"/>
</dbReference>
<dbReference type="SMR" id="B9JDV2"/>
<dbReference type="STRING" id="311403.Arad_2005"/>
<dbReference type="KEGG" id="ara:Arad_2005"/>
<dbReference type="eggNOG" id="COG0202">
    <property type="taxonomic scope" value="Bacteria"/>
</dbReference>
<dbReference type="HOGENOM" id="CLU_053084_0_0_5"/>
<dbReference type="Proteomes" id="UP000001600">
    <property type="component" value="Chromosome 1"/>
</dbReference>
<dbReference type="GO" id="GO:0005737">
    <property type="term" value="C:cytoplasm"/>
    <property type="evidence" value="ECO:0007669"/>
    <property type="project" value="UniProtKB-ARBA"/>
</dbReference>
<dbReference type="GO" id="GO:0000428">
    <property type="term" value="C:DNA-directed RNA polymerase complex"/>
    <property type="evidence" value="ECO:0007669"/>
    <property type="project" value="UniProtKB-KW"/>
</dbReference>
<dbReference type="GO" id="GO:0003677">
    <property type="term" value="F:DNA binding"/>
    <property type="evidence" value="ECO:0007669"/>
    <property type="project" value="UniProtKB-UniRule"/>
</dbReference>
<dbReference type="GO" id="GO:0003899">
    <property type="term" value="F:DNA-directed RNA polymerase activity"/>
    <property type="evidence" value="ECO:0007669"/>
    <property type="project" value="UniProtKB-UniRule"/>
</dbReference>
<dbReference type="GO" id="GO:0046983">
    <property type="term" value="F:protein dimerization activity"/>
    <property type="evidence" value="ECO:0007669"/>
    <property type="project" value="InterPro"/>
</dbReference>
<dbReference type="GO" id="GO:0006351">
    <property type="term" value="P:DNA-templated transcription"/>
    <property type="evidence" value="ECO:0007669"/>
    <property type="project" value="UniProtKB-UniRule"/>
</dbReference>
<dbReference type="CDD" id="cd06928">
    <property type="entry name" value="RNAP_alpha_NTD"/>
    <property type="match status" value="1"/>
</dbReference>
<dbReference type="FunFam" id="1.10.150.20:FF:000001">
    <property type="entry name" value="DNA-directed RNA polymerase subunit alpha"/>
    <property type="match status" value="1"/>
</dbReference>
<dbReference type="FunFam" id="2.170.120.12:FF:000001">
    <property type="entry name" value="DNA-directed RNA polymerase subunit alpha"/>
    <property type="match status" value="1"/>
</dbReference>
<dbReference type="Gene3D" id="1.10.150.20">
    <property type="entry name" value="5' to 3' exonuclease, C-terminal subdomain"/>
    <property type="match status" value="1"/>
</dbReference>
<dbReference type="Gene3D" id="2.170.120.12">
    <property type="entry name" value="DNA-directed RNA polymerase, insert domain"/>
    <property type="match status" value="1"/>
</dbReference>
<dbReference type="Gene3D" id="3.30.1360.10">
    <property type="entry name" value="RNA polymerase, RBP11-like subunit"/>
    <property type="match status" value="1"/>
</dbReference>
<dbReference type="HAMAP" id="MF_00059">
    <property type="entry name" value="RNApol_bact_RpoA"/>
    <property type="match status" value="1"/>
</dbReference>
<dbReference type="InterPro" id="IPR011262">
    <property type="entry name" value="DNA-dir_RNA_pol_insert"/>
</dbReference>
<dbReference type="InterPro" id="IPR011263">
    <property type="entry name" value="DNA-dir_RNA_pol_RpoA/D/Rpb3"/>
</dbReference>
<dbReference type="InterPro" id="IPR011773">
    <property type="entry name" value="DNA-dir_RpoA"/>
</dbReference>
<dbReference type="InterPro" id="IPR036603">
    <property type="entry name" value="RBP11-like"/>
</dbReference>
<dbReference type="InterPro" id="IPR011260">
    <property type="entry name" value="RNAP_asu_C"/>
</dbReference>
<dbReference type="InterPro" id="IPR036643">
    <property type="entry name" value="RNApol_insert_sf"/>
</dbReference>
<dbReference type="NCBIfam" id="NF003513">
    <property type="entry name" value="PRK05182.1-2"/>
    <property type="match status" value="1"/>
</dbReference>
<dbReference type="NCBIfam" id="NF003519">
    <property type="entry name" value="PRK05182.2-5"/>
    <property type="match status" value="1"/>
</dbReference>
<dbReference type="NCBIfam" id="TIGR02027">
    <property type="entry name" value="rpoA"/>
    <property type="match status" value="1"/>
</dbReference>
<dbReference type="Pfam" id="PF01000">
    <property type="entry name" value="RNA_pol_A_bac"/>
    <property type="match status" value="1"/>
</dbReference>
<dbReference type="Pfam" id="PF03118">
    <property type="entry name" value="RNA_pol_A_CTD"/>
    <property type="match status" value="1"/>
</dbReference>
<dbReference type="Pfam" id="PF01193">
    <property type="entry name" value="RNA_pol_L"/>
    <property type="match status" value="1"/>
</dbReference>
<dbReference type="SMART" id="SM00662">
    <property type="entry name" value="RPOLD"/>
    <property type="match status" value="1"/>
</dbReference>
<dbReference type="SUPFAM" id="SSF47789">
    <property type="entry name" value="C-terminal domain of RNA polymerase alpha subunit"/>
    <property type="match status" value="1"/>
</dbReference>
<dbReference type="SUPFAM" id="SSF56553">
    <property type="entry name" value="Insert subdomain of RNA polymerase alpha subunit"/>
    <property type="match status" value="1"/>
</dbReference>
<dbReference type="SUPFAM" id="SSF55257">
    <property type="entry name" value="RBP11-like subunits of RNA polymerase"/>
    <property type="match status" value="1"/>
</dbReference>